<proteinExistence type="evidence at transcript level"/>
<organism>
    <name type="scientific">Oryza sativa subsp. japonica</name>
    <name type="common">Rice</name>
    <dbReference type="NCBI Taxonomy" id="39947"/>
    <lineage>
        <taxon>Eukaryota</taxon>
        <taxon>Viridiplantae</taxon>
        <taxon>Streptophyta</taxon>
        <taxon>Embryophyta</taxon>
        <taxon>Tracheophyta</taxon>
        <taxon>Spermatophyta</taxon>
        <taxon>Magnoliopsida</taxon>
        <taxon>Liliopsida</taxon>
        <taxon>Poales</taxon>
        <taxon>Poaceae</taxon>
        <taxon>BOP clade</taxon>
        <taxon>Oryzoideae</taxon>
        <taxon>Oryzeae</taxon>
        <taxon>Oryzinae</taxon>
        <taxon>Oryza</taxon>
        <taxon>Oryza sativa</taxon>
    </lineage>
</organism>
<dbReference type="EC" id="2.1.1.56"/>
<dbReference type="EMBL" id="AP004257">
    <property type="protein sequence ID" value="BAD19434.1"/>
    <property type="molecule type" value="Genomic_DNA"/>
</dbReference>
<dbReference type="EMBL" id="AP008208">
    <property type="protein sequence ID" value="BAF10219.1"/>
    <property type="molecule type" value="Genomic_DNA"/>
</dbReference>
<dbReference type="EMBL" id="AP014958">
    <property type="protein sequence ID" value="BAS81216.1"/>
    <property type="molecule type" value="Genomic_DNA"/>
</dbReference>
<dbReference type="EMBL" id="AK067608">
    <property type="protein sequence ID" value="BAG90499.1"/>
    <property type="molecule type" value="mRNA"/>
</dbReference>
<dbReference type="EMBL" id="AK121526">
    <property type="status" value="NOT_ANNOTATED_CDS"/>
    <property type="molecule type" value="mRNA"/>
</dbReference>
<dbReference type="RefSeq" id="XP_015623577.1">
    <property type="nucleotide sequence ID" value="XM_015768091.1"/>
</dbReference>
<dbReference type="SMR" id="Q6K833"/>
<dbReference type="FunCoup" id="Q6K833">
    <property type="interactions" value="817"/>
</dbReference>
<dbReference type="STRING" id="39947.Q6K833"/>
<dbReference type="PaxDb" id="39947-Q6K833"/>
<dbReference type="EnsemblPlants" id="Os02t0780600-01">
    <property type="protein sequence ID" value="Os02t0780600-01"/>
    <property type="gene ID" value="Os02g0780600"/>
</dbReference>
<dbReference type="EnsemblPlants" id="Os02t0780600-02">
    <property type="protein sequence ID" value="Os02t0780600-02"/>
    <property type="gene ID" value="Os02g0780600"/>
</dbReference>
<dbReference type="Gramene" id="Os02t0780600-01">
    <property type="protein sequence ID" value="Os02t0780600-01"/>
    <property type="gene ID" value="Os02g0780600"/>
</dbReference>
<dbReference type="Gramene" id="Os02t0780600-02">
    <property type="protein sequence ID" value="Os02t0780600-02"/>
    <property type="gene ID" value="Os02g0780600"/>
</dbReference>
<dbReference type="KEGG" id="dosa:Os02g0780600"/>
<dbReference type="eggNOG" id="ENOG502QR4R">
    <property type="taxonomic scope" value="Eukaryota"/>
</dbReference>
<dbReference type="HOGENOM" id="CLU_045607_0_0_1"/>
<dbReference type="InParanoid" id="Q6K833"/>
<dbReference type="OMA" id="LDEMEWQ"/>
<dbReference type="OrthoDB" id="10248867at2759"/>
<dbReference type="Proteomes" id="UP000000763">
    <property type="component" value="Chromosome 2"/>
</dbReference>
<dbReference type="Proteomes" id="UP000059680">
    <property type="component" value="Chromosome 2"/>
</dbReference>
<dbReference type="GO" id="GO:0005634">
    <property type="term" value="C:nucleus"/>
    <property type="evidence" value="ECO:0000318"/>
    <property type="project" value="GO_Central"/>
</dbReference>
<dbReference type="GO" id="GO:0004482">
    <property type="term" value="F:mRNA 5'-cap (guanine-N7-)-methyltransferase activity"/>
    <property type="evidence" value="ECO:0000318"/>
    <property type="project" value="GO_Central"/>
</dbReference>
<dbReference type="GO" id="GO:0003723">
    <property type="term" value="F:RNA binding"/>
    <property type="evidence" value="ECO:0007669"/>
    <property type="project" value="UniProtKB-KW"/>
</dbReference>
<dbReference type="GO" id="GO:0006370">
    <property type="term" value="P:7-methylguanosine mRNA capping"/>
    <property type="evidence" value="ECO:0000318"/>
    <property type="project" value="GO_Central"/>
</dbReference>
<dbReference type="CDD" id="cd02440">
    <property type="entry name" value="AdoMet_MTases"/>
    <property type="match status" value="1"/>
</dbReference>
<dbReference type="FunFam" id="3.40.50.150:FF:000191">
    <property type="entry name" value="mRNA cap guanine-N7 methyltransferase 2"/>
    <property type="match status" value="1"/>
</dbReference>
<dbReference type="Gene3D" id="3.40.50.150">
    <property type="entry name" value="Vaccinia Virus protein VP39"/>
    <property type="match status" value="1"/>
</dbReference>
<dbReference type="InterPro" id="IPR004971">
    <property type="entry name" value="mRNA_G-N7_MeTrfase_dom"/>
</dbReference>
<dbReference type="InterPro" id="IPR039753">
    <property type="entry name" value="RG7MT1"/>
</dbReference>
<dbReference type="InterPro" id="IPR029063">
    <property type="entry name" value="SAM-dependent_MTases_sf"/>
</dbReference>
<dbReference type="PANTHER" id="PTHR12189:SF3">
    <property type="entry name" value="MRNA (GUANINE-N(7))-METHYLTRANSFERASE"/>
    <property type="match status" value="1"/>
</dbReference>
<dbReference type="PANTHER" id="PTHR12189">
    <property type="entry name" value="MRNA GUANINE-7- METHYLTRANSFERASE"/>
    <property type="match status" value="1"/>
</dbReference>
<dbReference type="Pfam" id="PF03291">
    <property type="entry name" value="mRNA_G-N7_MeTrfase"/>
    <property type="match status" value="1"/>
</dbReference>
<dbReference type="SUPFAM" id="SSF53335">
    <property type="entry name" value="S-adenosyl-L-methionine-dependent methyltransferases"/>
    <property type="match status" value="1"/>
</dbReference>
<dbReference type="PROSITE" id="PS51562">
    <property type="entry name" value="RNA_CAP0_MT"/>
    <property type="match status" value="1"/>
</dbReference>
<name>MCES2_ORYSJ</name>
<feature type="chain" id="PRO_0000260153" description="mRNA cap guanine-N(7) methyltransferase 2">
    <location>
        <begin position="1"/>
        <end position="339"/>
    </location>
</feature>
<feature type="domain" description="mRNA cap 0 methyltransferase" evidence="2">
    <location>
        <begin position="1"/>
        <end position="277"/>
    </location>
</feature>
<feature type="region of interest" description="Disordered" evidence="3">
    <location>
        <begin position="314"/>
        <end position="339"/>
    </location>
</feature>
<feature type="binding site" evidence="2">
    <location>
        <position position="14"/>
    </location>
    <ligand>
        <name>S-adenosyl-L-methionine</name>
        <dbReference type="ChEBI" id="CHEBI:59789"/>
    </ligand>
</feature>
<feature type="binding site" evidence="2">
    <location>
        <position position="54"/>
    </location>
    <ligand>
        <name>S-adenosyl-L-methionine</name>
        <dbReference type="ChEBI" id="CHEBI:59789"/>
    </ligand>
</feature>
<feature type="binding site" evidence="2">
    <location>
        <begin position="82"/>
        <end position="83"/>
    </location>
    <ligand>
        <name>S-adenosyl-L-methionine</name>
        <dbReference type="ChEBI" id="CHEBI:59789"/>
    </ligand>
</feature>
<feature type="site" description="mRNA cap binding" evidence="2">
    <location>
        <position position="41"/>
    </location>
</feature>
<feature type="site" description="mRNA cap binding" evidence="2">
    <location>
        <position position="269"/>
    </location>
</feature>
<feature type="sequence conflict" description="In Ref. 4; AK121526." evidence="4" ref="4">
    <original>E</original>
    <variation>V</variation>
    <location>
        <position position="116"/>
    </location>
</feature>
<keyword id="KW-0489">Methyltransferase</keyword>
<keyword id="KW-0506">mRNA capping</keyword>
<keyword id="KW-0507">mRNA processing</keyword>
<keyword id="KW-0539">Nucleus</keyword>
<keyword id="KW-1185">Reference proteome</keyword>
<keyword id="KW-0694">RNA-binding</keyword>
<keyword id="KW-0949">S-adenosyl-L-methionine</keyword>
<keyword id="KW-0808">Transferase</keyword>
<reference key="1">
    <citation type="journal article" date="2005" name="Nature">
        <title>The map-based sequence of the rice genome.</title>
        <authorList>
            <consortium name="International rice genome sequencing project (IRGSP)"/>
        </authorList>
    </citation>
    <scope>NUCLEOTIDE SEQUENCE [LARGE SCALE GENOMIC DNA]</scope>
    <source>
        <strain>cv. Nipponbare</strain>
    </source>
</reference>
<reference key="2">
    <citation type="journal article" date="2008" name="Nucleic Acids Res.">
        <title>The rice annotation project database (RAP-DB): 2008 update.</title>
        <authorList>
            <consortium name="The rice annotation project (RAP)"/>
        </authorList>
    </citation>
    <scope>GENOME REANNOTATION</scope>
    <source>
        <strain>cv. Nipponbare</strain>
    </source>
</reference>
<reference key="3">
    <citation type="journal article" date="2013" name="Rice">
        <title>Improvement of the Oryza sativa Nipponbare reference genome using next generation sequence and optical map data.</title>
        <authorList>
            <person name="Kawahara Y."/>
            <person name="de la Bastide M."/>
            <person name="Hamilton J.P."/>
            <person name="Kanamori H."/>
            <person name="McCombie W.R."/>
            <person name="Ouyang S."/>
            <person name="Schwartz D.C."/>
            <person name="Tanaka T."/>
            <person name="Wu J."/>
            <person name="Zhou S."/>
            <person name="Childs K.L."/>
            <person name="Davidson R.M."/>
            <person name="Lin H."/>
            <person name="Quesada-Ocampo L."/>
            <person name="Vaillancourt B."/>
            <person name="Sakai H."/>
            <person name="Lee S.S."/>
            <person name="Kim J."/>
            <person name="Numa H."/>
            <person name="Itoh T."/>
            <person name="Buell C.R."/>
            <person name="Matsumoto T."/>
        </authorList>
    </citation>
    <scope>GENOME REANNOTATION</scope>
    <source>
        <strain>cv. Nipponbare</strain>
    </source>
</reference>
<reference key="4">
    <citation type="journal article" date="2003" name="Science">
        <title>Collection, mapping, and annotation of over 28,000 cDNA clones from japonica rice.</title>
        <authorList>
            <consortium name="The rice full-length cDNA consortium"/>
        </authorList>
    </citation>
    <scope>NUCLEOTIDE SEQUENCE [LARGE SCALE MRNA]</scope>
    <source>
        <strain>cv. Nipponbare</strain>
    </source>
</reference>
<comment type="function">
    <text evidence="1">mRNA-capping methyltransferase that methylates the N7 position of the added guanosine to the 5'-cap structure of mRNAs. Binds RNA containing 5'-terminal GpppC (By similarity).</text>
</comment>
<comment type="catalytic activity">
    <reaction evidence="2">
        <text>a 5'-end (5'-triphosphoguanosine)-ribonucleoside in mRNA + S-adenosyl-L-methionine = a 5'-end (N(7)-methyl 5'-triphosphoguanosine)-ribonucleoside in mRNA + S-adenosyl-L-homocysteine</text>
        <dbReference type="Rhea" id="RHEA:67008"/>
        <dbReference type="Rhea" id="RHEA-COMP:17166"/>
        <dbReference type="Rhea" id="RHEA-COMP:17167"/>
        <dbReference type="ChEBI" id="CHEBI:57856"/>
        <dbReference type="ChEBI" id="CHEBI:59789"/>
        <dbReference type="ChEBI" id="CHEBI:156461"/>
        <dbReference type="ChEBI" id="CHEBI:167617"/>
        <dbReference type="EC" id="2.1.1.56"/>
    </reaction>
</comment>
<comment type="subcellular location">
    <subcellularLocation>
        <location evidence="1">Nucleus</location>
    </subcellularLocation>
</comment>
<comment type="similarity">
    <text evidence="2">Belongs to the class I-like SAM-binding methyltransferase superfamily. mRNA cap 0 methyltransferase family.</text>
</comment>
<evidence type="ECO:0000250" key="1"/>
<evidence type="ECO:0000255" key="2">
    <source>
        <dbReference type="PROSITE-ProRule" id="PRU00895"/>
    </source>
</evidence>
<evidence type="ECO:0000256" key="3">
    <source>
        <dbReference type="SAM" id="MobiDB-lite"/>
    </source>
</evidence>
<evidence type="ECO:0000305" key="4"/>
<accession>Q6K833</accession>
<accession>B7EDQ2</accession>
<sequence>MAVTPHHRLYEFAKTALIKIFAFPYATVCDLYCDGGVDTDKWGDAQIGHYIGIDASASGVNDARELWESRKKLFTSEFIELDPSADDFEAQMQEKGIQADIVCCMQHLQLCFESEEHAQKLLNNVSSLLKPGGYFVGIIPDSSTIWTKYQKNVEASHNKGLKTVPNSIRSENYVITFEVEEEKFPFFGKKYQLKFANESMFENHCLVHFPSFMRLAREAGLEYVEIQNLTEFYDDNRTQFAPLLGGYGSSLVDPRGKLVARSFDILGLYSTFVFQKPDPDAMPPIVTPELHDPENDQEEEWLWTQQASMDDGRVSRTDILPPADNEKGILGPGPADMRL</sequence>
<gene>
    <name type="ordered locus">Os02g0780600</name>
    <name type="ordered locus">LOC_Os02g54000</name>
    <name type="ORF">OJ1369_G08.2</name>
</gene>
<protein>
    <recommendedName>
        <fullName>mRNA cap guanine-N(7) methyltransferase 2</fullName>
        <ecNumber>2.1.1.56</ecNumber>
    </recommendedName>
    <alternativeName>
        <fullName>mRNA (guanine-N(7))-methyltransferase 2</fullName>
    </alternativeName>
    <alternativeName>
        <fullName>mRNA cap methyltransferase 2</fullName>
    </alternativeName>
</protein>